<evidence type="ECO:0000255" key="1">
    <source>
        <dbReference type="HAMAP-Rule" id="MF_01020"/>
    </source>
</evidence>
<comment type="catalytic activity">
    <reaction evidence="1">
        <text>1-(5-phospho-beta-D-ribosyl)-ATP + H2O = 1-(5-phospho-beta-D-ribosyl)-5'-AMP + diphosphate + H(+)</text>
        <dbReference type="Rhea" id="RHEA:22828"/>
        <dbReference type="ChEBI" id="CHEBI:15377"/>
        <dbReference type="ChEBI" id="CHEBI:15378"/>
        <dbReference type="ChEBI" id="CHEBI:33019"/>
        <dbReference type="ChEBI" id="CHEBI:59457"/>
        <dbReference type="ChEBI" id="CHEBI:73183"/>
        <dbReference type="EC" id="3.6.1.31"/>
    </reaction>
</comment>
<comment type="pathway">
    <text evidence="1">Amino-acid biosynthesis; L-histidine biosynthesis; L-histidine from 5-phospho-alpha-D-ribose 1-diphosphate: step 2/9.</text>
</comment>
<comment type="subcellular location">
    <subcellularLocation>
        <location evidence="1">Cytoplasm</location>
    </subcellularLocation>
</comment>
<comment type="similarity">
    <text evidence="1">Belongs to the PRA-PH family.</text>
</comment>
<sequence>MGDSVLSAIQQTIIQRKSADPSESYVAQLLHKGEDKILKKVIEEAGEVLMASKDKDPSHLVYEVADLWFHTMILLTHHDLKAEDVLDELSRRQGLSGLAEKAARTES</sequence>
<proteinExistence type="inferred from homology"/>
<name>HIS2_NEIG1</name>
<feature type="chain" id="PRO_0000230179" description="Phosphoribosyl-ATP pyrophosphatase">
    <location>
        <begin position="1"/>
        <end position="107"/>
    </location>
</feature>
<gene>
    <name evidence="1" type="primary">hisE</name>
    <name type="ordered locus">NGO_0185</name>
</gene>
<protein>
    <recommendedName>
        <fullName evidence="1">Phosphoribosyl-ATP pyrophosphatase</fullName>
        <shortName evidence="1">PRA-PH</shortName>
        <ecNumber evidence="1">3.6.1.31</ecNumber>
    </recommendedName>
</protein>
<organism>
    <name type="scientific">Neisseria gonorrhoeae (strain ATCC 700825 / FA 1090)</name>
    <dbReference type="NCBI Taxonomy" id="242231"/>
    <lineage>
        <taxon>Bacteria</taxon>
        <taxon>Pseudomonadati</taxon>
        <taxon>Pseudomonadota</taxon>
        <taxon>Betaproteobacteria</taxon>
        <taxon>Neisseriales</taxon>
        <taxon>Neisseriaceae</taxon>
        <taxon>Neisseria</taxon>
    </lineage>
</organism>
<accession>Q5FA47</accession>
<keyword id="KW-0028">Amino-acid biosynthesis</keyword>
<keyword id="KW-0067">ATP-binding</keyword>
<keyword id="KW-0963">Cytoplasm</keyword>
<keyword id="KW-0368">Histidine biosynthesis</keyword>
<keyword id="KW-0378">Hydrolase</keyword>
<keyword id="KW-0547">Nucleotide-binding</keyword>
<keyword id="KW-1185">Reference proteome</keyword>
<reference key="1">
    <citation type="submission" date="2003-03" db="EMBL/GenBank/DDBJ databases">
        <title>The complete genome sequence of Neisseria gonorrhoeae.</title>
        <authorList>
            <person name="Lewis L.A."/>
            <person name="Gillaspy A.F."/>
            <person name="McLaughlin R.E."/>
            <person name="Gipson M."/>
            <person name="Ducey T.F."/>
            <person name="Ownbey T."/>
            <person name="Hartman K."/>
            <person name="Nydick C."/>
            <person name="Carson M.B."/>
            <person name="Vaughn J."/>
            <person name="Thomson C."/>
            <person name="Song L."/>
            <person name="Lin S."/>
            <person name="Yuan X."/>
            <person name="Najar F."/>
            <person name="Zhan M."/>
            <person name="Ren Q."/>
            <person name="Zhu H."/>
            <person name="Qi S."/>
            <person name="Kenton S.M."/>
            <person name="Lai H."/>
            <person name="White J.D."/>
            <person name="Clifton S."/>
            <person name="Roe B.A."/>
            <person name="Dyer D.W."/>
        </authorList>
    </citation>
    <scope>NUCLEOTIDE SEQUENCE [LARGE SCALE GENOMIC DNA]</scope>
    <source>
        <strain>ATCC 700825 / FA 1090</strain>
    </source>
</reference>
<dbReference type="EC" id="3.6.1.31" evidence="1"/>
<dbReference type="EMBL" id="AE004969">
    <property type="protein sequence ID" value="AAW88940.1"/>
    <property type="molecule type" value="Genomic_DNA"/>
</dbReference>
<dbReference type="RefSeq" id="WP_003687491.1">
    <property type="nucleotide sequence ID" value="NC_002946.2"/>
</dbReference>
<dbReference type="RefSeq" id="YP_207352.1">
    <property type="nucleotide sequence ID" value="NC_002946.2"/>
</dbReference>
<dbReference type="SMR" id="Q5FA47"/>
<dbReference type="STRING" id="242231.NGO_0185"/>
<dbReference type="KEGG" id="ngo:NGO_0185"/>
<dbReference type="PATRIC" id="fig|242231.10.peg.231"/>
<dbReference type="HOGENOM" id="CLU_123337_1_2_4"/>
<dbReference type="UniPathway" id="UPA00031">
    <property type="reaction ID" value="UER00007"/>
</dbReference>
<dbReference type="Proteomes" id="UP000000535">
    <property type="component" value="Chromosome"/>
</dbReference>
<dbReference type="GO" id="GO:0005737">
    <property type="term" value="C:cytoplasm"/>
    <property type="evidence" value="ECO:0007669"/>
    <property type="project" value="UniProtKB-SubCell"/>
</dbReference>
<dbReference type="GO" id="GO:0005524">
    <property type="term" value="F:ATP binding"/>
    <property type="evidence" value="ECO:0007669"/>
    <property type="project" value="UniProtKB-KW"/>
</dbReference>
<dbReference type="GO" id="GO:0004636">
    <property type="term" value="F:phosphoribosyl-ATP diphosphatase activity"/>
    <property type="evidence" value="ECO:0007669"/>
    <property type="project" value="UniProtKB-UniRule"/>
</dbReference>
<dbReference type="GO" id="GO:0000105">
    <property type="term" value="P:L-histidine biosynthetic process"/>
    <property type="evidence" value="ECO:0007669"/>
    <property type="project" value="UniProtKB-UniRule"/>
</dbReference>
<dbReference type="CDD" id="cd11534">
    <property type="entry name" value="NTP-PPase_HisIE_like"/>
    <property type="match status" value="1"/>
</dbReference>
<dbReference type="FunFam" id="1.10.287.1080:FF:000002">
    <property type="entry name" value="Histidine biosynthesis bifunctional protein HisIE"/>
    <property type="match status" value="1"/>
</dbReference>
<dbReference type="Gene3D" id="1.10.287.1080">
    <property type="entry name" value="MazG-like"/>
    <property type="match status" value="1"/>
</dbReference>
<dbReference type="HAMAP" id="MF_01020">
    <property type="entry name" value="HisE"/>
    <property type="match status" value="1"/>
</dbReference>
<dbReference type="InterPro" id="IPR008179">
    <property type="entry name" value="HisE"/>
</dbReference>
<dbReference type="InterPro" id="IPR021130">
    <property type="entry name" value="PRib-ATP_PPHydrolase-like"/>
</dbReference>
<dbReference type="NCBIfam" id="TIGR03188">
    <property type="entry name" value="histidine_hisI"/>
    <property type="match status" value="1"/>
</dbReference>
<dbReference type="NCBIfam" id="NF001611">
    <property type="entry name" value="PRK00400.1-3"/>
    <property type="match status" value="1"/>
</dbReference>
<dbReference type="PANTHER" id="PTHR42945">
    <property type="entry name" value="HISTIDINE BIOSYNTHESIS BIFUNCTIONAL PROTEIN"/>
    <property type="match status" value="1"/>
</dbReference>
<dbReference type="PANTHER" id="PTHR42945:SF9">
    <property type="entry name" value="HISTIDINE BIOSYNTHESIS BIFUNCTIONAL PROTEIN HISIE"/>
    <property type="match status" value="1"/>
</dbReference>
<dbReference type="Pfam" id="PF01503">
    <property type="entry name" value="PRA-PH"/>
    <property type="match status" value="1"/>
</dbReference>
<dbReference type="SUPFAM" id="SSF101386">
    <property type="entry name" value="all-alpha NTP pyrophosphatases"/>
    <property type="match status" value="1"/>
</dbReference>